<proteinExistence type="inferred from homology"/>
<comment type="function">
    <text evidence="1">Part of the high-affinity ATP-driven potassium transport (or Kdp) system, which catalyzes the hydrolysis of ATP coupled with the electrogenic transport of potassium into the cytoplasm. This subunit is responsible for energy coupling to the transport system and for the release of the potassium ions to the cytoplasm.</text>
</comment>
<comment type="catalytic activity">
    <reaction evidence="1">
        <text>K(+)(out) + ATP + H2O = K(+)(in) + ADP + phosphate + H(+)</text>
        <dbReference type="Rhea" id="RHEA:16777"/>
        <dbReference type="ChEBI" id="CHEBI:15377"/>
        <dbReference type="ChEBI" id="CHEBI:15378"/>
        <dbReference type="ChEBI" id="CHEBI:29103"/>
        <dbReference type="ChEBI" id="CHEBI:30616"/>
        <dbReference type="ChEBI" id="CHEBI:43474"/>
        <dbReference type="ChEBI" id="CHEBI:456216"/>
        <dbReference type="EC" id="7.2.2.6"/>
    </reaction>
    <physiologicalReaction direction="left-to-right" evidence="1">
        <dbReference type="Rhea" id="RHEA:16778"/>
    </physiologicalReaction>
</comment>
<comment type="subunit">
    <text evidence="1">The system is composed of three essential subunits: KdpA, KdpB and KdpC.</text>
</comment>
<comment type="subcellular location">
    <subcellularLocation>
        <location evidence="1">Cell inner membrane</location>
        <topology evidence="1">Multi-pass membrane protein</topology>
    </subcellularLocation>
</comment>
<comment type="similarity">
    <text evidence="1">Belongs to the cation transport ATPase (P-type) (TC 3.A.3) family. Type IA subfamily.</text>
</comment>
<sequence length="682" mass="72160">MSRKQLALFEPVLLVQALTDAVKKLSPRAQWRNPVMFVVWAGSVLTTLLTLAMVTGQIAGSALFTGIISLWLWFTVLFANFAEALAEGRSKAQANSLKGVKKTAFARRLRAPRHDAQADNVPAAELRKGDIVLVKAGDIIPCDGEVIEGGASVDESAITGESAPVIRESGGDFASVTGGTRILSDWLVIACSVNPGETFLDRMIAMVEGAQRRKTPNEIALTILLIALTIVFLLATATLWPFSAWGGNAVSVTVLVALLVCLIPTTIGGLLSAIGVAGMSRMLGANVIATSGRAVEAAGDVDVLLLDKTGTITLGNRQASDFIPARGVDERTLADAAQLASLADETPEGRSIVILAKQRFNLRERDVQSLHATFVPFTAQSRMSGINIDNRMIRKGSVDAIRRHVESNGGHFPADVEQNVENVARLGATPLVVVEGARVLGVIALKDIVKGGIKERFAQLRKMGIKTVMITGDNRLTAAAIAAEAGVDDFLAEATPEAKLALIRQYQAEGRLVAMTGDGTNDAPALAQADVAVAMNSGTQAAKEAGNMVDLDSNPTKLIEVVHIGKQMLMTRGSLTTFSIANDVAKYFAIIPAAFAATYPQLNALNVMGLHSPNSAILSAVIFNALIIIFLIPLALKGVSYKPLSASAMLRRNLWIYGLGGLVVPFIGIKVIDVLLTLLGLA</sequence>
<organism>
    <name type="scientific">Salmonella heidelberg (strain SL476)</name>
    <dbReference type="NCBI Taxonomy" id="454169"/>
    <lineage>
        <taxon>Bacteria</taxon>
        <taxon>Pseudomonadati</taxon>
        <taxon>Pseudomonadota</taxon>
        <taxon>Gammaproteobacteria</taxon>
        <taxon>Enterobacterales</taxon>
        <taxon>Enterobacteriaceae</taxon>
        <taxon>Salmonella</taxon>
    </lineage>
</organism>
<dbReference type="EC" id="7.2.2.6" evidence="1"/>
<dbReference type="EMBL" id="CP001120">
    <property type="protein sequence ID" value="ACF69020.1"/>
    <property type="molecule type" value="Genomic_DNA"/>
</dbReference>
<dbReference type="RefSeq" id="WP_000088026.1">
    <property type="nucleotide sequence ID" value="NC_011083.1"/>
</dbReference>
<dbReference type="SMR" id="B4TBA6"/>
<dbReference type="KEGG" id="seh:SeHA_C0827"/>
<dbReference type="HOGENOM" id="CLU_025728_2_0_6"/>
<dbReference type="Proteomes" id="UP000001866">
    <property type="component" value="Chromosome"/>
</dbReference>
<dbReference type="GO" id="GO:0005886">
    <property type="term" value="C:plasma membrane"/>
    <property type="evidence" value="ECO:0007669"/>
    <property type="project" value="UniProtKB-SubCell"/>
</dbReference>
<dbReference type="GO" id="GO:0005524">
    <property type="term" value="F:ATP binding"/>
    <property type="evidence" value="ECO:0007669"/>
    <property type="project" value="UniProtKB-UniRule"/>
</dbReference>
<dbReference type="GO" id="GO:0016887">
    <property type="term" value="F:ATP hydrolysis activity"/>
    <property type="evidence" value="ECO:0007669"/>
    <property type="project" value="InterPro"/>
</dbReference>
<dbReference type="GO" id="GO:0000287">
    <property type="term" value="F:magnesium ion binding"/>
    <property type="evidence" value="ECO:0007669"/>
    <property type="project" value="UniProtKB-UniRule"/>
</dbReference>
<dbReference type="GO" id="GO:0008556">
    <property type="term" value="F:P-type potassium transmembrane transporter activity"/>
    <property type="evidence" value="ECO:0007669"/>
    <property type="project" value="UniProtKB-UniRule"/>
</dbReference>
<dbReference type="CDD" id="cd02078">
    <property type="entry name" value="P-type_ATPase_K"/>
    <property type="match status" value="1"/>
</dbReference>
<dbReference type="FunFam" id="2.70.150.10:FF:000010">
    <property type="entry name" value="Potassium-transporting ATPase ATP-binding subunit"/>
    <property type="match status" value="1"/>
</dbReference>
<dbReference type="FunFam" id="3.40.1110.10:FF:000007">
    <property type="entry name" value="Potassium-transporting ATPase ATP-binding subunit"/>
    <property type="match status" value="1"/>
</dbReference>
<dbReference type="Gene3D" id="3.40.1110.10">
    <property type="entry name" value="Calcium-transporting ATPase, cytoplasmic domain N"/>
    <property type="match status" value="1"/>
</dbReference>
<dbReference type="Gene3D" id="2.70.150.10">
    <property type="entry name" value="Calcium-transporting ATPase, cytoplasmic transduction domain A"/>
    <property type="match status" value="1"/>
</dbReference>
<dbReference type="Gene3D" id="3.40.50.1000">
    <property type="entry name" value="HAD superfamily/HAD-like"/>
    <property type="match status" value="1"/>
</dbReference>
<dbReference type="HAMAP" id="MF_00285">
    <property type="entry name" value="KdpB"/>
    <property type="match status" value="1"/>
</dbReference>
<dbReference type="InterPro" id="IPR023299">
    <property type="entry name" value="ATPase_P-typ_cyto_dom_N"/>
</dbReference>
<dbReference type="InterPro" id="IPR018303">
    <property type="entry name" value="ATPase_P-typ_P_site"/>
</dbReference>
<dbReference type="InterPro" id="IPR023298">
    <property type="entry name" value="ATPase_P-typ_TM_dom_sf"/>
</dbReference>
<dbReference type="InterPro" id="IPR008250">
    <property type="entry name" value="ATPase_P-typ_transduc_dom_A_sf"/>
</dbReference>
<dbReference type="InterPro" id="IPR036412">
    <property type="entry name" value="HAD-like_sf"/>
</dbReference>
<dbReference type="InterPro" id="IPR023214">
    <property type="entry name" value="HAD_sf"/>
</dbReference>
<dbReference type="InterPro" id="IPR006391">
    <property type="entry name" value="P-type_ATPase_bsu_IA"/>
</dbReference>
<dbReference type="InterPro" id="IPR001757">
    <property type="entry name" value="P_typ_ATPase"/>
</dbReference>
<dbReference type="InterPro" id="IPR044492">
    <property type="entry name" value="P_typ_ATPase_HD_dom"/>
</dbReference>
<dbReference type="NCBIfam" id="TIGR01494">
    <property type="entry name" value="ATPase_P-type"/>
    <property type="match status" value="2"/>
</dbReference>
<dbReference type="NCBIfam" id="TIGR01497">
    <property type="entry name" value="kdpB"/>
    <property type="match status" value="1"/>
</dbReference>
<dbReference type="PANTHER" id="PTHR43743">
    <property type="entry name" value="POTASSIUM-TRANSPORTING ATPASE ATP-BINDING SUBUNIT"/>
    <property type="match status" value="1"/>
</dbReference>
<dbReference type="PANTHER" id="PTHR43743:SF1">
    <property type="entry name" value="POTASSIUM-TRANSPORTING ATPASE ATP-BINDING SUBUNIT"/>
    <property type="match status" value="1"/>
</dbReference>
<dbReference type="Pfam" id="PF00122">
    <property type="entry name" value="E1-E2_ATPase"/>
    <property type="match status" value="1"/>
</dbReference>
<dbReference type="Pfam" id="PF00702">
    <property type="entry name" value="Hydrolase"/>
    <property type="match status" value="1"/>
</dbReference>
<dbReference type="PRINTS" id="PR00119">
    <property type="entry name" value="CATATPASE"/>
</dbReference>
<dbReference type="SFLD" id="SFLDS00003">
    <property type="entry name" value="Haloacid_Dehalogenase"/>
    <property type="match status" value="1"/>
</dbReference>
<dbReference type="SFLD" id="SFLDF00027">
    <property type="entry name" value="p-type_atpase"/>
    <property type="match status" value="1"/>
</dbReference>
<dbReference type="SUPFAM" id="SSF81653">
    <property type="entry name" value="Calcium ATPase, transduction domain A"/>
    <property type="match status" value="1"/>
</dbReference>
<dbReference type="SUPFAM" id="SSF81665">
    <property type="entry name" value="Calcium ATPase, transmembrane domain M"/>
    <property type="match status" value="1"/>
</dbReference>
<dbReference type="SUPFAM" id="SSF56784">
    <property type="entry name" value="HAD-like"/>
    <property type="match status" value="1"/>
</dbReference>
<dbReference type="SUPFAM" id="SSF81660">
    <property type="entry name" value="Metal cation-transporting ATPase, ATP-binding domain N"/>
    <property type="match status" value="1"/>
</dbReference>
<dbReference type="PROSITE" id="PS00154">
    <property type="entry name" value="ATPASE_E1_E2"/>
    <property type="match status" value="1"/>
</dbReference>
<protein>
    <recommendedName>
        <fullName evidence="1">Potassium-transporting ATPase ATP-binding subunit</fullName>
        <ecNumber evidence="1">7.2.2.6</ecNumber>
    </recommendedName>
    <alternativeName>
        <fullName evidence="1">ATP phosphohydrolase [potassium-transporting] B chain</fullName>
    </alternativeName>
    <alternativeName>
        <fullName evidence="1">Potassium-binding and translocating subunit B</fullName>
    </alternativeName>
    <alternativeName>
        <fullName evidence="1">Potassium-translocating ATPase B chain</fullName>
    </alternativeName>
</protein>
<reference key="1">
    <citation type="journal article" date="2011" name="J. Bacteriol.">
        <title>Comparative genomics of 28 Salmonella enterica isolates: evidence for CRISPR-mediated adaptive sublineage evolution.</title>
        <authorList>
            <person name="Fricke W.F."/>
            <person name="Mammel M.K."/>
            <person name="McDermott P.F."/>
            <person name="Tartera C."/>
            <person name="White D.G."/>
            <person name="Leclerc J.E."/>
            <person name="Ravel J."/>
            <person name="Cebula T.A."/>
        </authorList>
    </citation>
    <scope>NUCLEOTIDE SEQUENCE [LARGE SCALE GENOMIC DNA]</scope>
    <source>
        <strain>SL476</strain>
    </source>
</reference>
<gene>
    <name evidence="1" type="primary">kdpB</name>
    <name type="ordered locus">SeHA_C0827</name>
</gene>
<evidence type="ECO:0000255" key="1">
    <source>
        <dbReference type="HAMAP-Rule" id="MF_00285"/>
    </source>
</evidence>
<feature type="chain" id="PRO_1000114961" description="Potassium-transporting ATPase ATP-binding subunit">
    <location>
        <begin position="1"/>
        <end position="682"/>
    </location>
</feature>
<feature type="transmembrane region" description="Helical" evidence="1">
    <location>
        <begin position="34"/>
        <end position="54"/>
    </location>
</feature>
<feature type="transmembrane region" description="Helical" evidence="1">
    <location>
        <begin position="58"/>
        <end position="78"/>
    </location>
</feature>
<feature type="transmembrane region" description="Helical" evidence="1">
    <location>
        <begin position="219"/>
        <end position="239"/>
    </location>
</feature>
<feature type="transmembrane region" description="Helical" evidence="1">
    <location>
        <begin position="254"/>
        <end position="274"/>
    </location>
</feature>
<feature type="transmembrane region" description="Helical" evidence="1">
    <location>
        <begin position="588"/>
        <end position="608"/>
    </location>
</feature>
<feature type="transmembrane region" description="Helical" evidence="1">
    <location>
        <begin position="616"/>
        <end position="636"/>
    </location>
</feature>
<feature type="transmembrane region" description="Helical" evidence="1">
    <location>
        <begin position="662"/>
        <end position="682"/>
    </location>
</feature>
<feature type="active site" description="4-aspartylphosphate intermediate" evidence="1">
    <location>
        <position position="307"/>
    </location>
</feature>
<feature type="binding site" evidence="1">
    <location>
        <position position="344"/>
    </location>
    <ligand>
        <name>ATP</name>
        <dbReference type="ChEBI" id="CHEBI:30616"/>
    </ligand>
</feature>
<feature type="binding site" evidence="1">
    <location>
        <position position="348"/>
    </location>
    <ligand>
        <name>ATP</name>
        <dbReference type="ChEBI" id="CHEBI:30616"/>
    </ligand>
</feature>
<feature type="binding site" evidence="1">
    <location>
        <begin position="377"/>
        <end position="384"/>
    </location>
    <ligand>
        <name>ATP</name>
        <dbReference type="ChEBI" id="CHEBI:30616"/>
    </ligand>
</feature>
<feature type="binding site" evidence="1">
    <location>
        <position position="395"/>
    </location>
    <ligand>
        <name>ATP</name>
        <dbReference type="ChEBI" id="CHEBI:30616"/>
    </ligand>
</feature>
<feature type="binding site" evidence="1">
    <location>
        <position position="518"/>
    </location>
    <ligand>
        <name>Mg(2+)</name>
        <dbReference type="ChEBI" id="CHEBI:18420"/>
    </ligand>
</feature>
<feature type="binding site" evidence="1">
    <location>
        <position position="522"/>
    </location>
    <ligand>
        <name>Mg(2+)</name>
        <dbReference type="ChEBI" id="CHEBI:18420"/>
    </ligand>
</feature>
<accession>B4TBA6</accession>
<keyword id="KW-0067">ATP-binding</keyword>
<keyword id="KW-0997">Cell inner membrane</keyword>
<keyword id="KW-1003">Cell membrane</keyword>
<keyword id="KW-0406">Ion transport</keyword>
<keyword id="KW-0460">Magnesium</keyword>
<keyword id="KW-0472">Membrane</keyword>
<keyword id="KW-0479">Metal-binding</keyword>
<keyword id="KW-0547">Nucleotide-binding</keyword>
<keyword id="KW-0597">Phosphoprotein</keyword>
<keyword id="KW-0630">Potassium</keyword>
<keyword id="KW-0633">Potassium transport</keyword>
<keyword id="KW-1278">Translocase</keyword>
<keyword id="KW-0812">Transmembrane</keyword>
<keyword id="KW-1133">Transmembrane helix</keyword>
<keyword id="KW-0813">Transport</keyword>
<name>KDPB_SALHS</name>